<name>MURG_SHEDO</name>
<comment type="function">
    <text evidence="1">Cell wall formation. Catalyzes the transfer of a GlcNAc subunit on undecaprenyl-pyrophosphoryl-MurNAc-pentapeptide (lipid intermediate I) to form undecaprenyl-pyrophosphoryl-MurNAc-(pentapeptide)GlcNAc (lipid intermediate II).</text>
</comment>
<comment type="catalytic activity">
    <reaction evidence="1">
        <text>di-trans,octa-cis-undecaprenyl diphospho-N-acetyl-alpha-D-muramoyl-L-alanyl-D-glutamyl-meso-2,6-diaminopimeloyl-D-alanyl-D-alanine + UDP-N-acetyl-alpha-D-glucosamine = di-trans,octa-cis-undecaprenyl diphospho-[N-acetyl-alpha-D-glucosaminyl-(1-&gt;4)]-N-acetyl-alpha-D-muramoyl-L-alanyl-D-glutamyl-meso-2,6-diaminopimeloyl-D-alanyl-D-alanine + UDP + H(+)</text>
        <dbReference type="Rhea" id="RHEA:31227"/>
        <dbReference type="ChEBI" id="CHEBI:15378"/>
        <dbReference type="ChEBI" id="CHEBI:57705"/>
        <dbReference type="ChEBI" id="CHEBI:58223"/>
        <dbReference type="ChEBI" id="CHEBI:61387"/>
        <dbReference type="ChEBI" id="CHEBI:61388"/>
        <dbReference type="EC" id="2.4.1.227"/>
    </reaction>
</comment>
<comment type="pathway">
    <text evidence="1">Cell wall biogenesis; peptidoglycan biosynthesis.</text>
</comment>
<comment type="subcellular location">
    <subcellularLocation>
        <location evidence="1">Cell inner membrane</location>
        <topology evidence="1">Peripheral membrane protein</topology>
        <orientation evidence="1">Cytoplasmic side</orientation>
    </subcellularLocation>
</comment>
<comment type="similarity">
    <text evidence="1">Belongs to the glycosyltransferase 28 family. MurG subfamily.</text>
</comment>
<accession>Q12SC6</accession>
<gene>
    <name evidence="1" type="primary">murG</name>
    <name type="ordered locus">Sden_0355</name>
</gene>
<evidence type="ECO:0000255" key="1">
    <source>
        <dbReference type="HAMAP-Rule" id="MF_00033"/>
    </source>
</evidence>
<protein>
    <recommendedName>
        <fullName evidence="1">UDP-N-acetylglucosamine--N-acetylmuramyl-(pentapeptide) pyrophosphoryl-undecaprenol N-acetylglucosamine transferase</fullName>
        <ecNumber evidence="1">2.4.1.227</ecNumber>
    </recommendedName>
    <alternativeName>
        <fullName evidence="1">Undecaprenyl-PP-MurNAc-pentapeptide-UDPGlcNAc GlcNAc transferase</fullName>
    </alternativeName>
</protein>
<sequence length="366" mass="38814">MTVNPMAPRILIMAGGTGGHVFPALAVAKNLAEKGWQVRWLGTADRMEARLVPQHGFDIDFIDIQGVRGNGLLRTLAAPFKIMRSIMQAREVIAEFKPQVILGMGGFASGPGGVAGRLAGIPLVLHEQNAIPGMTNKLLARIATKVLCAFPNTFALAGQSVQVVGNPVREELALLGSMKQQGQHDALKVLVVGGSLGAKVLNEVMPNVVAQLSRSLSITVWHQVGKNNLASTKACYQQMGQAVNVNVAEFIDDMEAAYRWADVVVCRSGALTVSELAAVGLPSILVPYPHAVDDHQTVNAAILVDAGAGFLLPQAILTSDNLAEKLSLFANNPEVLVQMGKQAREVAVLDATNKVAEICAELARKS</sequence>
<organism>
    <name type="scientific">Shewanella denitrificans (strain OS217 / ATCC BAA-1090 / DSM 15013)</name>
    <dbReference type="NCBI Taxonomy" id="318161"/>
    <lineage>
        <taxon>Bacteria</taxon>
        <taxon>Pseudomonadati</taxon>
        <taxon>Pseudomonadota</taxon>
        <taxon>Gammaproteobacteria</taxon>
        <taxon>Alteromonadales</taxon>
        <taxon>Shewanellaceae</taxon>
        <taxon>Shewanella</taxon>
    </lineage>
</organism>
<keyword id="KW-0131">Cell cycle</keyword>
<keyword id="KW-0132">Cell division</keyword>
<keyword id="KW-0997">Cell inner membrane</keyword>
<keyword id="KW-1003">Cell membrane</keyword>
<keyword id="KW-0133">Cell shape</keyword>
<keyword id="KW-0961">Cell wall biogenesis/degradation</keyword>
<keyword id="KW-0328">Glycosyltransferase</keyword>
<keyword id="KW-0472">Membrane</keyword>
<keyword id="KW-0573">Peptidoglycan synthesis</keyword>
<keyword id="KW-1185">Reference proteome</keyword>
<keyword id="KW-0808">Transferase</keyword>
<dbReference type="EC" id="2.4.1.227" evidence="1"/>
<dbReference type="EMBL" id="CP000302">
    <property type="protein sequence ID" value="ABE53650.1"/>
    <property type="molecule type" value="Genomic_DNA"/>
</dbReference>
<dbReference type="RefSeq" id="WP_011494817.1">
    <property type="nucleotide sequence ID" value="NC_007954.1"/>
</dbReference>
<dbReference type="SMR" id="Q12SC6"/>
<dbReference type="STRING" id="318161.Sden_0355"/>
<dbReference type="CAZy" id="GT28">
    <property type="family name" value="Glycosyltransferase Family 28"/>
</dbReference>
<dbReference type="KEGG" id="sdn:Sden_0355"/>
<dbReference type="eggNOG" id="COG0707">
    <property type="taxonomic scope" value="Bacteria"/>
</dbReference>
<dbReference type="HOGENOM" id="CLU_037404_2_0_6"/>
<dbReference type="UniPathway" id="UPA00219"/>
<dbReference type="Proteomes" id="UP000001982">
    <property type="component" value="Chromosome"/>
</dbReference>
<dbReference type="GO" id="GO:0005886">
    <property type="term" value="C:plasma membrane"/>
    <property type="evidence" value="ECO:0007669"/>
    <property type="project" value="UniProtKB-SubCell"/>
</dbReference>
<dbReference type="GO" id="GO:0051991">
    <property type="term" value="F:UDP-N-acetyl-D-glucosamine:N-acetylmuramoyl-L-alanyl-D-glutamyl-meso-2,6-diaminopimelyl-D-alanyl-D-alanine-diphosphoundecaprenol 4-beta-N-acetylglucosaminlytransferase activity"/>
    <property type="evidence" value="ECO:0007669"/>
    <property type="project" value="RHEA"/>
</dbReference>
<dbReference type="GO" id="GO:0050511">
    <property type="term" value="F:undecaprenyldiphospho-muramoylpentapeptide beta-N-acetylglucosaminyltransferase activity"/>
    <property type="evidence" value="ECO:0007669"/>
    <property type="project" value="UniProtKB-UniRule"/>
</dbReference>
<dbReference type="GO" id="GO:0005975">
    <property type="term" value="P:carbohydrate metabolic process"/>
    <property type="evidence" value="ECO:0007669"/>
    <property type="project" value="InterPro"/>
</dbReference>
<dbReference type="GO" id="GO:0051301">
    <property type="term" value="P:cell division"/>
    <property type="evidence" value="ECO:0007669"/>
    <property type="project" value="UniProtKB-KW"/>
</dbReference>
<dbReference type="GO" id="GO:0071555">
    <property type="term" value="P:cell wall organization"/>
    <property type="evidence" value="ECO:0007669"/>
    <property type="project" value="UniProtKB-KW"/>
</dbReference>
<dbReference type="GO" id="GO:0030259">
    <property type="term" value="P:lipid glycosylation"/>
    <property type="evidence" value="ECO:0007669"/>
    <property type="project" value="UniProtKB-UniRule"/>
</dbReference>
<dbReference type="GO" id="GO:0009252">
    <property type="term" value="P:peptidoglycan biosynthetic process"/>
    <property type="evidence" value="ECO:0007669"/>
    <property type="project" value="UniProtKB-UniRule"/>
</dbReference>
<dbReference type="GO" id="GO:0008360">
    <property type="term" value="P:regulation of cell shape"/>
    <property type="evidence" value="ECO:0007669"/>
    <property type="project" value="UniProtKB-KW"/>
</dbReference>
<dbReference type="CDD" id="cd03785">
    <property type="entry name" value="GT28_MurG"/>
    <property type="match status" value="1"/>
</dbReference>
<dbReference type="Gene3D" id="3.40.50.2000">
    <property type="entry name" value="Glycogen Phosphorylase B"/>
    <property type="match status" value="2"/>
</dbReference>
<dbReference type="HAMAP" id="MF_00033">
    <property type="entry name" value="MurG"/>
    <property type="match status" value="1"/>
</dbReference>
<dbReference type="InterPro" id="IPR006009">
    <property type="entry name" value="GlcNAc_MurG"/>
</dbReference>
<dbReference type="InterPro" id="IPR007235">
    <property type="entry name" value="Glyco_trans_28_C"/>
</dbReference>
<dbReference type="InterPro" id="IPR004276">
    <property type="entry name" value="GlycoTrans_28_N"/>
</dbReference>
<dbReference type="NCBIfam" id="TIGR01133">
    <property type="entry name" value="murG"/>
    <property type="match status" value="1"/>
</dbReference>
<dbReference type="PANTHER" id="PTHR21015:SF22">
    <property type="entry name" value="GLYCOSYLTRANSFERASE"/>
    <property type="match status" value="1"/>
</dbReference>
<dbReference type="PANTHER" id="PTHR21015">
    <property type="entry name" value="UDP-N-ACETYLGLUCOSAMINE--N-ACETYLMURAMYL-(PENTAPEPTIDE) PYROPHOSPHORYL-UNDECAPRENOL N-ACETYLGLUCOSAMINE TRANSFERASE 1"/>
    <property type="match status" value="1"/>
</dbReference>
<dbReference type="Pfam" id="PF04101">
    <property type="entry name" value="Glyco_tran_28_C"/>
    <property type="match status" value="1"/>
</dbReference>
<dbReference type="Pfam" id="PF03033">
    <property type="entry name" value="Glyco_transf_28"/>
    <property type="match status" value="1"/>
</dbReference>
<dbReference type="SUPFAM" id="SSF53756">
    <property type="entry name" value="UDP-Glycosyltransferase/glycogen phosphorylase"/>
    <property type="match status" value="1"/>
</dbReference>
<feature type="chain" id="PRO_1000002688" description="UDP-N-acetylglucosamine--N-acetylmuramyl-(pentapeptide) pyrophosphoryl-undecaprenol N-acetylglucosamine transferase">
    <location>
        <begin position="1"/>
        <end position="366"/>
    </location>
</feature>
<feature type="binding site" evidence="1">
    <location>
        <begin position="17"/>
        <end position="19"/>
    </location>
    <ligand>
        <name>UDP-N-acetyl-alpha-D-glucosamine</name>
        <dbReference type="ChEBI" id="CHEBI:57705"/>
    </ligand>
</feature>
<feature type="binding site" evidence="1">
    <location>
        <position position="129"/>
    </location>
    <ligand>
        <name>UDP-N-acetyl-alpha-D-glucosamine</name>
        <dbReference type="ChEBI" id="CHEBI:57705"/>
    </ligand>
</feature>
<feature type="binding site" evidence="1">
    <location>
        <position position="169"/>
    </location>
    <ligand>
        <name>UDP-N-acetyl-alpha-D-glucosamine</name>
        <dbReference type="ChEBI" id="CHEBI:57705"/>
    </ligand>
</feature>
<feature type="binding site" evidence="1">
    <location>
        <position position="195"/>
    </location>
    <ligand>
        <name>UDP-N-acetyl-alpha-D-glucosamine</name>
        <dbReference type="ChEBI" id="CHEBI:57705"/>
    </ligand>
</feature>
<feature type="binding site" evidence="1">
    <location>
        <position position="251"/>
    </location>
    <ligand>
        <name>UDP-N-acetyl-alpha-D-glucosamine</name>
        <dbReference type="ChEBI" id="CHEBI:57705"/>
    </ligand>
</feature>
<feature type="binding site" evidence="1">
    <location>
        <begin position="270"/>
        <end position="275"/>
    </location>
    <ligand>
        <name>UDP-N-acetyl-alpha-D-glucosamine</name>
        <dbReference type="ChEBI" id="CHEBI:57705"/>
    </ligand>
</feature>
<feature type="binding site" evidence="1">
    <location>
        <position position="296"/>
    </location>
    <ligand>
        <name>UDP-N-acetyl-alpha-D-glucosamine</name>
        <dbReference type="ChEBI" id="CHEBI:57705"/>
    </ligand>
</feature>
<proteinExistence type="inferred from homology"/>
<reference key="1">
    <citation type="submission" date="2006-03" db="EMBL/GenBank/DDBJ databases">
        <title>Complete sequence of Shewanella denitrificans OS217.</title>
        <authorList>
            <consortium name="US DOE Joint Genome Institute"/>
            <person name="Copeland A."/>
            <person name="Lucas S."/>
            <person name="Lapidus A."/>
            <person name="Barry K."/>
            <person name="Detter J.C."/>
            <person name="Glavina del Rio T."/>
            <person name="Hammon N."/>
            <person name="Israni S."/>
            <person name="Dalin E."/>
            <person name="Tice H."/>
            <person name="Pitluck S."/>
            <person name="Brettin T."/>
            <person name="Bruce D."/>
            <person name="Han C."/>
            <person name="Tapia R."/>
            <person name="Gilna P."/>
            <person name="Kiss H."/>
            <person name="Schmutz J."/>
            <person name="Larimer F."/>
            <person name="Land M."/>
            <person name="Hauser L."/>
            <person name="Kyrpides N."/>
            <person name="Lykidis A."/>
            <person name="Richardson P."/>
        </authorList>
    </citation>
    <scope>NUCLEOTIDE SEQUENCE [LARGE SCALE GENOMIC DNA]</scope>
    <source>
        <strain>OS217 / ATCC BAA-1090 / DSM 15013</strain>
    </source>
</reference>